<feature type="chain" id="PRO_0000166458" description="Uncharacterized membrane protein HI_0867">
    <location>
        <begin position="1"/>
        <end position="404"/>
    </location>
</feature>
<feature type="transmembrane region" description="Helical" evidence="1">
    <location>
        <begin position="9"/>
        <end position="29"/>
    </location>
</feature>
<feature type="transmembrane region" description="Helical" evidence="1">
    <location>
        <begin position="36"/>
        <end position="56"/>
    </location>
</feature>
<feature type="transmembrane region" description="Helical" evidence="1">
    <location>
        <begin position="76"/>
        <end position="96"/>
    </location>
</feature>
<feature type="transmembrane region" description="Helical" evidence="1">
    <location>
        <begin position="103"/>
        <end position="123"/>
    </location>
</feature>
<feature type="transmembrane region" description="Helical" evidence="1">
    <location>
        <begin position="135"/>
        <end position="155"/>
    </location>
</feature>
<feature type="transmembrane region" description="Helical" evidence="1">
    <location>
        <begin position="162"/>
        <end position="182"/>
    </location>
</feature>
<feature type="transmembrane region" description="Helical" evidence="1">
    <location>
        <begin position="199"/>
        <end position="219"/>
    </location>
</feature>
<feature type="transmembrane region" description="Helical" evidence="1">
    <location>
        <begin position="236"/>
        <end position="256"/>
    </location>
</feature>
<feature type="transmembrane region" description="Helical" evidence="1">
    <location>
        <begin position="288"/>
        <end position="308"/>
    </location>
</feature>
<feature type="transmembrane region" description="Helical" evidence="1">
    <location>
        <begin position="319"/>
        <end position="339"/>
    </location>
</feature>
<feature type="transmembrane region" description="Helical" evidence="1">
    <location>
        <begin position="366"/>
        <end position="386"/>
    </location>
</feature>
<gene>
    <name type="ordered locus">HI_0867</name>
</gene>
<proteinExistence type="inferred from homology"/>
<comment type="subcellular location">
    <subcellularLocation>
        <location evidence="2">Cell membrane</location>
        <topology evidence="2">Multi-pass membrane protein</topology>
    </subcellularLocation>
</comment>
<comment type="similarity">
    <text evidence="2">Belongs to the polysaccharide synthase family. HI_0867/HI_1700 subfamily.</text>
</comment>
<organism>
    <name type="scientific">Haemophilus influenzae (strain ATCC 51907 / DSM 11121 / KW20 / Rd)</name>
    <dbReference type="NCBI Taxonomy" id="71421"/>
    <lineage>
        <taxon>Bacteria</taxon>
        <taxon>Pseudomonadati</taxon>
        <taxon>Pseudomonadota</taxon>
        <taxon>Gammaproteobacteria</taxon>
        <taxon>Pasteurellales</taxon>
        <taxon>Pasteurellaceae</taxon>
        <taxon>Haemophilus</taxon>
    </lineage>
</organism>
<keyword id="KW-1003">Cell membrane</keyword>
<keyword id="KW-0472">Membrane</keyword>
<keyword id="KW-1185">Reference proteome</keyword>
<keyword id="KW-0812">Transmembrane</keyword>
<keyword id="KW-1133">Transmembrane helix</keyword>
<sequence length="404" mass="46373">MSLIKDSSIYLIGELSAKCVPFLLLPYLSRKLGVEGFGELSYYQTFLPLFVIFIGLSQDGAVARYFYVYGKRSLNLVVKTGYAYTLSIGGLGLLFCWLMQSEIMFYLVLSAIFQVFLSVQLSIRQCQKQAIPYTFIQVSSTITNAALTILMLEFYQTDLVEKRILAILISNVFVALLSYLIYRKRVNNKKFYFLQYKTAFFYIMSFGFLMIFHHGSFFIRQLDRIFIFHRFSEAELGLYAMGAQIAFILSVFILAINKALVPYLFEKLKQGSVKLKDLHRWSLLSLLIVPIPSLVTLIVPEQWLLFFLGKHFIGVKYYIIVFLLSTSLTIPYLFLVNYLFYHGKTKEISFCSVLSTMIYLGALGGLIFTDVVYIPYASVLGALGILPVLYKITKRVEENEYATH</sequence>
<name>Y867_HAEIN</name>
<dbReference type="EMBL" id="L42023">
    <property type="protein sequence ID" value="AAC22525.1"/>
    <property type="molecule type" value="Genomic_DNA"/>
</dbReference>
<dbReference type="PIR" id="H64160">
    <property type="entry name" value="H64160"/>
</dbReference>
<dbReference type="RefSeq" id="NP_439027.1">
    <property type="nucleotide sequence ID" value="NC_000907.1"/>
</dbReference>
<dbReference type="SMR" id="Q57484"/>
<dbReference type="STRING" id="71421.HI_0867"/>
<dbReference type="EnsemblBacteria" id="AAC22525">
    <property type="protein sequence ID" value="AAC22525"/>
    <property type="gene ID" value="HI_0867"/>
</dbReference>
<dbReference type="KEGG" id="hin:HI_0867"/>
<dbReference type="PATRIC" id="fig|71421.8.peg.908"/>
<dbReference type="eggNOG" id="COG2244">
    <property type="taxonomic scope" value="Bacteria"/>
</dbReference>
<dbReference type="HOGENOM" id="CLU_022017_7_0_6"/>
<dbReference type="OrthoDB" id="9815248at2"/>
<dbReference type="PhylomeDB" id="Q57484"/>
<dbReference type="BioCyc" id="HINF71421:G1GJ1-908-MONOMER"/>
<dbReference type="Proteomes" id="UP000000579">
    <property type="component" value="Chromosome"/>
</dbReference>
<dbReference type="GO" id="GO:0005886">
    <property type="term" value="C:plasma membrane"/>
    <property type="evidence" value="ECO:0007669"/>
    <property type="project" value="UniProtKB-SubCell"/>
</dbReference>
<dbReference type="CDD" id="cd13128">
    <property type="entry name" value="MATE_Wzx_like"/>
    <property type="match status" value="1"/>
</dbReference>
<dbReference type="InterPro" id="IPR002797">
    <property type="entry name" value="Polysacc_synth"/>
</dbReference>
<dbReference type="InterPro" id="IPR052556">
    <property type="entry name" value="PolySynth_Transporter"/>
</dbReference>
<dbReference type="PANTHER" id="PTHR43424">
    <property type="entry name" value="LOCUS PUTATIVE PROTEIN 1-RELATED"/>
    <property type="match status" value="1"/>
</dbReference>
<dbReference type="PANTHER" id="PTHR43424:SF1">
    <property type="entry name" value="LOCUS PUTATIVE PROTEIN 1-RELATED"/>
    <property type="match status" value="1"/>
</dbReference>
<dbReference type="Pfam" id="PF01943">
    <property type="entry name" value="Polysacc_synt"/>
    <property type="match status" value="1"/>
</dbReference>
<accession>Q57484</accession>
<evidence type="ECO:0000255" key="1"/>
<evidence type="ECO:0000305" key="2"/>
<protein>
    <recommendedName>
        <fullName>Uncharacterized membrane protein HI_0867</fullName>
    </recommendedName>
</protein>
<reference key="1">
    <citation type="journal article" date="1995" name="Science">
        <title>Whole-genome random sequencing and assembly of Haemophilus influenzae Rd.</title>
        <authorList>
            <person name="Fleischmann R.D."/>
            <person name="Adams M.D."/>
            <person name="White O."/>
            <person name="Clayton R.A."/>
            <person name="Kirkness E.F."/>
            <person name="Kerlavage A.R."/>
            <person name="Bult C.J."/>
            <person name="Tomb J.-F."/>
            <person name="Dougherty B.A."/>
            <person name="Merrick J.M."/>
            <person name="McKenney K."/>
            <person name="Sutton G.G."/>
            <person name="FitzHugh W."/>
            <person name="Fields C.A."/>
            <person name="Gocayne J.D."/>
            <person name="Scott J.D."/>
            <person name="Shirley R."/>
            <person name="Liu L.-I."/>
            <person name="Glodek A."/>
            <person name="Kelley J.M."/>
            <person name="Weidman J.F."/>
            <person name="Phillips C.A."/>
            <person name="Spriggs T."/>
            <person name="Hedblom E."/>
            <person name="Cotton M.D."/>
            <person name="Utterback T.R."/>
            <person name="Hanna M.C."/>
            <person name="Nguyen D.T."/>
            <person name="Saudek D.M."/>
            <person name="Brandon R.C."/>
            <person name="Fine L.D."/>
            <person name="Fritchman J.L."/>
            <person name="Fuhrmann J.L."/>
            <person name="Geoghagen N.S.M."/>
            <person name="Gnehm C.L."/>
            <person name="McDonald L.A."/>
            <person name="Small K.V."/>
            <person name="Fraser C.M."/>
            <person name="Smith H.O."/>
            <person name="Venter J.C."/>
        </authorList>
    </citation>
    <scope>NUCLEOTIDE SEQUENCE [LARGE SCALE GENOMIC DNA]</scope>
    <source>
        <strain>ATCC 51907 / DSM 11121 / KW20 / Rd</strain>
    </source>
</reference>